<sequence>MARTKQTARKSTGGKAPRKQLATKAARKSAPATGGVKKPHRYRPGTVALREIRRYQKSTELLIRKLPFQRLVREIAQDFKTDLRFQSSAVMALQEASEAYLVGLFEDTNLCAIHAKRVTIMPKDIQLARRIRGERA</sequence>
<proteinExistence type="inferred from homology"/>
<name>H3_TIGCA</name>
<keyword id="KW-0007">Acetylation</keyword>
<keyword id="KW-0158">Chromosome</keyword>
<keyword id="KW-0238">DNA-binding</keyword>
<keyword id="KW-0488">Methylation</keyword>
<keyword id="KW-0544">Nucleosome core</keyword>
<keyword id="KW-0539">Nucleus</keyword>
<protein>
    <recommendedName>
        <fullName>Histone H3</fullName>
    </recommendedName>
</protein>
<reference key="1">
    <citation type="journal article" date="1991" name="DNA Seq.">
        <title>An H3-H4 histone gene pair in the marine copepod Tigriopus californicus, contains an intergenic dyad symmetry element.</title>
        <authorList>
            <person name="Porter D."/>
            <person name="Brown D."/>
            <person name="Wells D."/>
        </authorList>
    </citation>
    <scope>NUCLEOTIDE SEQUENCE [GENOMIC DNA]</scope>
</reference>
<reference key="2">
    <citation type="journal article" date="1992" name="DNA Seq.">
        <title>Closely linked H2B genes in the marine copepod, Tigriopus californicus indicate a recent gene duplication or gene conversion event.</title>
        <authorList>
            <person name="Brown D."/>
            <person name="Cook A."/>
            <person name="Wagner M."/>
            <person name="Wells D."/>
        </authorList>
    </citation>
    <scope>NUCLEOTIDE SEQUENCE [GENOMIC DNA]</scope>
</reference>
<accession>P84237</accession>
<accession>P02295</accession>
<accession>P02297</accession>
<accession>P16105</accession>
<accession>P17269</accession>
<accession>P17320</accession>
<feature type="initiator methionine" description="Removed" evidence="1">
    <location>
        <position position="1"/>
    </location>
</feature>
<feature type="chain" id="PRO_0000221309" description="Histone H3">
    <location>
        <begin position="2"/>
        <end position="136"/>
    </location>
</feature>
<feature type="region of interest" description="Disordered" evidence="2">
    <location>
        <begin position="1"/>
        <end position="43"/>
    </location>
</feature>
<feature type="modified residue" description="N6-methylated lysine" evidence="1">
    <location>
        <position position="10"/>
    </location>
</feature>
<feature type="modified residue" description="N6-acetyllysine" evidence="1">
    <location>
        <position position="15"/>
    </location>
</feature>
<feature type="modified residue" description="N6-acetyllysine" evidence="1">
    <location>
        <position position="24"/>
    </location>
</feature>
<feature type="modified residue" description="N6-methylated lysine" evidence="1">
    <location>
        <position position="28"/>
    </location>
</feature>
<feature type="modified residue" description="N6-methylated lysine" evidence="1">
    <location>
        <position position="37"/>
    </location>
</feature>
<comment type="function">
    <text>Core component of nucleosome. Nucleosomes wrap and compact DNA into chromatin, limiting DNA accessibility to the cellular machineries which require DNA as a template. Histones thereby play a central role in transcription regulation, DNA repair, DNA replication and chromosomal stability. DNA accessibility is regulated via a complex set of post-translational modifications of histones, also called histone code, and nucleosome remodeling.</text>
</comment>
<comment type="subunit">
    <text>The nucleosome is a histone octamer containing two molecules each of H2A, H2B, H3 and H4 assembled in one H3-H4 heterotetramer and two H2A-H2B heterodimers. The octamer wraps approximately 147 bp of DNA.</text>
</comment>
<comment type="subcellular location">
    <subcellularLocation>
        <location evidence="1">Nucleus</location>
    </subcellularLocation>
    <subcellularLocation>
        <location evidence="1">Chromosome</location>
    </subcellularLocation>
</comment>
<comment type="similarity">
    <text evidence="3">Belongs to the histone H3 family.</text>
</comment>
<dbReference type="EMBL" id="X52393">
    <property type="protein sequence ID" value="CAA36638.1"/>
    <property type="molecule type" value="Genomic_DNA"/>
</dbReference>
<dbReference type="EMBL" id="M84797">
    <property type="protein sequence ID" value="AAC41552.1"/>
    <property type="molecule type" value="Genomic_DNA"/>
</dbReference>
<dbReference type="RefSeq" id="XP_059078506.1">
    <property type="nucleotide sequence ID" value="XM_059222523.1"/>
</dbReference>
<dbReference type="RefSeq" id="XP_059081708.1">
    <property type="nucleotide sequence ID" value="XM_059225725.1"/>
</dbReference>
<dbReference type="RefSeq" id="XP_059081879.1">
    <property type="nucleotide sequence ID" value="XM_059225896.1"/>
</dbReference>
<dbReference type="RefSeq" id="XP_059087218.1">
    <property type="nucleotide sequence ID" value="XM_059231235.1"/>
</dbReference>
<dbReference type="RefSeq" id="XP_059095021.1">
    <property type="nucleotide sequence ID" value="XM_059239038.1"/>
</dbReference>
<dbReference type="RefSeq" id="XP_059095693.1">
    <property type="nucleotide sequence ID" value="XM_059239710.1"/>
</dbReference>
<dbReference type="SMR" id="P84237"/>
<dbReference type="GeneID" id="131876973"/>
<dbReference type="GeneID" id="131879412"/>
<dbReference type="GeneID" id="131879543"/>
<dbReference type="GeneID" id="131883711"/>
<dbReference type="GeneID" id="131889835"/>
<dbReference type="GeneID" id="131890373"/>
<dbReference type="OrthoDB" id="10250585at2759"/>
<dbReference type="GO" id="GO:0000786">
    <property type="term" value="C:nucleosome"/>
    <property type="evidence" value="ECO:0007669"/>
    <property type="project" value="UniProtKB-KW"/>
</dbReference>
<dbReference type="GO" id="GO:0005634">
    <property type="term" value="C:nucleus"/>
    <property type="evidence" value="ECO:0007669"/>
    <property type="project" value="UniProtKB-SubCell"/>
</dbReference>
<dbReference type="GO" id="GO:0003677">
    <property type="term" value="F:DNA binding"/>
    <property type="evidence" value="ECO:0007669"/>
    <property type="project" value="UniProtKB-KW"/>
</dbReference>
<dbReference type="GO" id="GO:0046982">
    <property type="term" value="F:protein heterodimerization activity"/>
    <property type="evidence" value="ECO:0007669"/>
    <property type="project" value="InterPro"/>
</dbReference>
<dbReference type="GO" id="GO:0030527">
    <property type="term" value="F:structural constituent of chromatin"/>
    <property type="evidence" value="ECO:0007669"/>
    <property type="project" value="InterPro"/>
</dbReference>
<dbReference type="CDD" id="cd22911">
    <property type="entry name" value="HFD_H3"/>
    <property type="match status" value="1"/>
</dbReference>
<dbReference type="FunFam" id="1.10.20.10:FF:000078">
    <property type="entry name" value="Histone H3"/>
    <property type="match status" value="1"/>
</dbReference>
<dbReference type="FunFam" id="1.10.20.10:FF:000044">
    <property type="entry name" value="Histone H3.3"/>
    <property type="match status" value="1"/>
</dbReference>
<dbReference type="Gene3D" id="1.10.20.10">
    <property type="entry name" value="Histone, subunit A"/>
    <property type="match status" value="1"/>
</dbReference>
<dbReference type="InterPro" id="IPR009072">
    <property type="entry name" value="Histone-fold"/>
</dbReference>
<dbReference type="InterPro" id="IPR007125">
    <property type="entry name" value="Histone_H2A/H2B/H3"/>
</dbReference>
<dbReference type="InterPro" id="IPR000164">
    <property type="entry name" value="Histone_H3/CENP-A"/>
</dbReference>
<dbReference type="PANTHER" id="PTHR11426">
    <property type="entry name" value="HISTONE H3"/>
    <property type="match status" value="1"/>
</dbReference>
<dbReference type="Pfam" id="PF00125">
    <property type="entry name" value="Histone"/>
    <property type="match status" value="1"/>
</dbReference>
<dbReference type="PRINTS" id="PR00622">
    <property type="entry name" value="HISTONEH3"/>
</dbReference>
<dbReference type="SMART" id="SM00428">
    <property type="entry name" value="H3"/>
    <property type="match status" value="1"/>
</dbReference>
<dbReference type="SUPFAM" id="SSF47113">
    <property type="entry name" value="Histone-fold"/>
    <property type="match status" value="1"/>
</dbReference>
<dbReference type="PROSITE" id="PS00322">
    <property type="entry name" value="HISTONE_H3_1"/>
    <property type="match status" value="1"/>
</dbReference>
<dbReference type="PROSITE" id="PS00959">
    <property type="entry name" value="HISTONE_H3_2"/>
    <property type="match status" value="1"/>
</dbReference>
<organism>
    <name type="scientific">Tigriopus californicus</name>
    <name type="common">Marine copepod</name>
    <dbReference type="NCBI Taxonomy" id="6832"/>
    <lineage>
        <taxon>Eukaryota</taxon>
        <taxon>Metazoa</taxon>
        <taxon>Ecdysozoa</taxon>
        <taxon>Arthropoda</taxon>
        <taxon>Crustacea</taxon>
        <taxon>Multicrustacea</taxon>
        <taxon>Hexanauplia</taxon>
        <taxon>Copepoda</taxon>
        <taxon>Harpacticoida</taxon>
        <taxon>Harpacticidae</taxon>
        <taxon>Tigriopus</taxon>
    </lineage>
</organism>
<evidence type="ECO:0000250" key="1"/>
<evidence type="ECO:0000256" key="2">
    <source>
        <dbReference type="SAM" id="MobiDB-lite"/>
    </source>
</evidence>
<evidence type="ECO:0000305" key="3"/>